<feature type="chain" id="PRO_1000093623" description="DNA mismatch repair protein MutS">
    <location>
        <begin position="1"/>
        <end position="853"/>
    </location>
</feature>
<feature type="binding site" evidence="1">
    <location>
        <begin position="614"/>
        <end position="621"/>
    </location>
    <ligand>
        <name>ATP</name>
        <dbReference type="ChEBI" id="CHEBI:30616"/>
    </ligand>
</feature>
<evidence type="ECO:0000255" key="1">
    <source>
        <dbReference type="HAMAP-Rule" id="MF_00096"/>
    </source>
</evidence>
<dbReference type="EMBL" id="CP000948">
    <property type="protein sequence ID" value="ACB03851.1"/>
    <property type="molecule type" value="Genomic_DNA"/>
</dbReference>
<dbReference type="RefSeq" id="WP_001272928.1">
    <property type="nucleotide sequence ID" value="NC_010473.1"/>
</dbReference>
<dbReference type="SMR" id="B1XCR0"/>
<dbReference type="KEGG" id="ecd:ECDH10B_2901"/>
<dbReference type="HOGENOM" id="CLU_002472_4_0_6"/>
<dbReference type="GO" id="GO:0005829">
    <property type="term" value="C:cytosol"/>
    <property type="evidence" value="ECO:0007669"/>
    <property type="project" value="TreeGrafter"/>
</dbReference>
<dbReference type="GO" id="GO:0005524">
    <property type="term" value="F:ATP binding"/>
    <property type="evidence" value="ECO:0007669"/>
    <property type="project" value="UniProtKB-UniRule"/>
</dbReference>
<dbReference type="GO" id="GO:0140664">
    <property type="term" value="F:ATP-dependent DNA damage sensor activity"/>
    <property type="evidence" value="ECO:0007669"/>
    <property type="project" value="InterPro"/>
</dbReference>
<dbReference type="GO" id="GO:0003684">
    <property type="term" value="F:damaged DNA binding"/>
    <property type="evidence" value="ECO:0007669"/>
    <property type="project" value="UniProtKB-UniRule"/>
</dbReference>
<dbReference type="GO" id="GO:0030983">
    <property type="term" value="F:mismatched DNA binding"/>
    <property type="evidence" value="ECO:0007669"/>
    <property type="project" value="InterPro"/>
</dbReference>
<dbReference type="GO" id="GO:0006298">
    <property type="term" value="P:mismatch repair"/>
    <property type="evidence" value="ECO:0007669"/>
    <property type="project" value="UniProtKB-UniRule"/>
</dbReference>
<dbReference type="CDD" id="cd03284">
    <property type="entry name" value="ABC_MutS1"/>
    <property type="match status" value="1"/>
</dbReference>
<dbReference type="FunFam" id="1.10.1420.10:FF:000002">
    <property type="entry name" value="DNA mismatch repair protein MutS"/>
    <property type="match status" value="1"/>
</dbReference>
<dbReference type="FunFam" id="3.30.420.110:FF:000001">
    <property type="entry name" value="DNA mismatch repair protein MutS"/>
    <property type="match status" value="1"/>
</dbReference>
<dbReference type="FunFam" id="3.40.1170.10:FF:000001">
    <property type="entry name" value="DNA mismatch repair protein MutS"/>
    <property type="match status" value="1"/>
</dbReference>
<dbReference type="FunFam" id="3.40.50.300:FF:000283">
    <property type="entry name" value="DNA mismatch repair protein MutS"/>
    <property type="match status" value="1"/>
</dbReference>
<dbReference type="Gene3D" id="1.10.1420.10">
    <property type="match status" value="2"/>
</dbReference>
<dbReference type="Gene3D" id="6.10.140.430">
    <property type="match status" value="1"/>
</dbReference>
<dbReference type="Gene3D" id="3.40.1170.10">
    <property type="entry name" value="DNA repair protein MutS, domain I"/>
    <property type="match status" value="1"/>
</dbReference>
<dbReference type="Gene3D" id="3.30.420.110">
    <property type="entry name" value="MutS, connector domain"/>
    <property type="match status" value="1"/>
</dbReference>
<dbReference type="Gene3D" id="3.40.50.300">
    <property type="entry name" value="P-loop containing nucleotide triphosphate hydrolases"/>
    <property type="match status" value="1"/>
</dbReference>
<dbReference type="HAMAP" id="MF_00096">
    <property type="entry name" value="MutS"/>
    <property type="match status" value="1"/>
</dbReference>
<dbReference type="InterPro" id="IPR005748">
    <property type="entry name" value="DNA_mismatch_repair_MutS"/>
</dbReference>
<dbReference type="InterPro" id="IPR007695">
    <property type="entry name" value="DNA_mismatch_repair_MutS-lik_N"/>
</dbReference>
<dbReference type="InterPro" id="IPR017261">
    <property type="entry name" value="DNA_mismatch_repair_MutS/MSH"/>
</dbReference>
<dbReference type="InterPro" id="IPR000432">
    <property type="entry name" value="DNA_mismatch_repair_MutS_C"/>
</dbReference>
<dbReference type="InterPro" id="IPR007861">
    <property type="entry name" value="DNA_mismatch_repair_MutS_clamp"/>
</dbReference>
<dbReference type="InterPro" id="IPR007696">
    <property type="entry name" value="DNA_mismatch_repair_MutS_core"/>
</dbReference>
<dbReference type="InterPro" id="IPR016151">
    <property type="entry name" value="DNA_mismatch_repair_MutS_N"/>
</dbReference>
<dbReference type="InterPro" id="IPR036187">
    <property type="entry name" value="DNA_mismatch_repair_MutS_sf"/>
</dbReference>
<dbReference type="InterPro" id="IPR007860">
    <property type="entry name" value="DNA_mmatch_repair_MutS_con_dom"/>
</dbReference>
<dbReference type="InterPro" id="IPR045076">
    <property type="entry name" value="MutS"/>
</dbReference>
<dbReference type="InterPro" id="IPR036678">
    <property type="entry name" value="MutS_con_dom_sf"/>
</dbReference>
<dbReference type="InterPro" id="IPR027417">
    <property type="entry name" value="P-loop_NTPase"/>
</dbReference>
<dbReference type="NCBIfam" id="TIGR01070">
    <property type="entry name" value="mutS1"/>
    <property type="match status" value="1"/>
</dbReference>
<dbReference type="NCBIfam" id="NF003810">
    <property type="entry name" value="PRK05399.1"/>
    <property type="match status" value="1"/>
</dbReference>
<dbReference type="PANTHER" id="PTHR11361:SF34">
    <property type="entry name" value="DNA MISMATCH REPAIR PROTEIN MSH1, MITOCHONDRIAL"/>
    <property type="match status" value="1"/>
</dbReference>
<dbReference type="PANTHER" id="PTHR11361">
    <property type="entry name" value="DNA MISMATCH REPAIR PROTEIN MUTS FAMILY MEMBER"/>
    <property type="match status" value="1"/>
</dbReference>
<dbReference type="Pfam" id="PF01624">
    <property type="entry name" value="MutS_I"/>
    <property type="match status" value="1"/>
</dbReference>
<dbReference type="Pfam" id="PF05188">
    <property type="entry name" value="MutS_II"/>
    <property type="match status" value="1"/>
</dbReference>
<dbReference type="Pfam" id="PF05192">
    <property type="entry name" value="MutS_III"/>
    <property type="match status" value="1"/>
</dbReference>
<dbReference type="Pfam" id="PF05190">
    <property type="entry name" value="MutS_IV"/>
    <property type="match status" value="1"/>
</dbReference>
<dbReference type="Pfam" id="PF00488">
    <property type="entry name" value="MutS_V"/>
    <property type="match status" value="1"/>
</dbReference>
<dbReference type="PIRSF" id="PIRSF037677">
    <property type="entry name" value="DNA_mis_repair_Msh6"/>
    <property type="match status" value="1"/>
</dbReference>
<dbReference type="SMART" id="SM00534">
    <property type="entry name" value="MUTSac"/>
    <property type="match status" value="1"/>
</dbReference>
<dbReference type="SMART" id="SM00533">
    <property type="entry name" value="MUTSd"/>
    <property type="match status" value="1"/>
</dbReference>
<dbReference type="SUPFAM" id="SSF55271">
    <property type="entry name" value="DNA repair protein MutS, domain I"/>
    <property type="match status" value="1"/>
</dbReference>
<dbReference type="SUPFAM" id="SSF53150">
    <property type="entry name" value="DNA repair protein MutS, domain II"/>
    <property type="match status" value="1"/>
</dbReference>
<dbReference type="SUPFAM" id="SSF48334">
    <property type="entry name" value="DNA repair protein MutS, domain III"/>
    <property type="match status" value="1"/>
</dbReference>
<dbReference type="SUPFAM" id="SSF52540">
    <property type="entry name" value="P-loop containing nucleoside triphosphate hydrolases"/>
    <property type="match status" value="1"/>
</dbReference>
<dbReference type="PROSITE" id="PS00486">
    <property type="entry name" value="DNA_MISMATCH_REPAIR_2"/>
    <property type="match status" value="1"/>
</dbReference>
<gene>
    <name evidence="1" type="primary">mutS</name>
    <name type="ordered locus">ECDH10B_2901</name>
</gene>
<proteinExistence type="inferred from homology"/>
<organism>
    <name type="scientific">Escherichia coli (strain K12 / DH10B)</name>
    <dbReference type="NCBI Taxonomy" id="316385"/>
    <lineage>
        <taxon>Bacteria</taxon>
        <taxon>Pseudomonadati</taxon>
        <taxon>Pseudomonadota</taxon>
        <taxon>Gammaproteobacteria</taxon>
        <taxon>Enterobacterales</taxon>
        <taxon>Enterobacteriaceae</taxon>
        <taxon>Escherichia</taxon>
    </lineage>
</organism>
<name>MUTS_ECODH</name>
<accession>B1XCR0</accession>
<keyword id="KW-0067">ATP-binding</keyword>
<keyword id="KW-0227">DNA damage</keyword>
<keyword id="KW-0234">DNA repair</keyword>
<keyword id="KW-0238">DNA-binding</keyword>
<keyword id="KW-0547">Nucleotide-binding</keyword>
<protein>
    <recommendedName>
        <fullName evidence="1">DNA mismatch repair protein MutS</fullName>
    </recommendedName>
</protein>
<sequence>MSAIENFDAHTPMMQQYLRLKAQHPEILLFYRMGDFYELFYDDAKRASQLLDISLTKRGASAGEPIPMAGIPYHAVENYLAKLVNQGESVAICEQIGDPATSKGPVERKVVRIVTPGTISDEALLQERQDNLLAAIWQDSKGFGYATLDISSGRFRLSEPADRETMAAELQRTNPAELLYAEDFAEMSLIEGRRGLRRRPLWEFEIDTARQQLNLQFGTRDLVGFGVENAPRGLCAAGCLLQYAKDTQRTTLPHIRSITMEREQDSIIMDAATRRNLEITQNLAGGAENTLASVLDCTVTPMGSRMLKRWLHMPVRDTRVLLERQQTIGALQDFTAGLQPVLRQVGDLERILARLALRTARPRDLARMRHAFQQLPELRAQLETVDSAPVQALREKMGEFAELRDLLERAIIDTPPVLVRDGGVIASGYNEELDEWRALADGATDYLERLEVRERERTGLDTLKVGFNAVHGYYIQISRGQSHLAPINYMRRQTLKNAERYIIPELKEYEDKVLTSKGKALALEKQLYEELFDLLLPHLEALQQSASALAELDVLVNLAERAYTLNYTCPTFIDKPGIRITEGRHPVVEQVLNEPFIANPLNLSPQRRMLIITGPNMGGKSTYMRQTALIALMAYIGSYVPAQKVEIGPIDRIFTRVGAADDLASGRSTFMVEMTETANILHNATEYSLVLMDEIGRGTSTYDGLSLAWACAENLANKIKALTLFATHYFELTQLPEKMEGVANVHLDALEHGDTIAFMHSVQDGAASKSYGLAVAALAGVPKEVIKRARQKLRELESISPNAAATQVDGTQMSLLSVPEETSPAVEALENLDPDSLTPRQALEWIYRLKSLV</sequence>
<comment type="function">
    <text evidence="1">This protein is involved in the repair of mismatches in DNA. It is possible that it carries out the mismatch recognition step. This protein has a weak ATPase activity.</text>
</comment>
<comment type="similarity">
    <text evidence="1">Belongs to the DNA mismatch repair MutS family.</text>
</comment>
<reference key="1">
    <citation type="journal article" date="2008" name="J. Bacteriol.">
        <title>The complete genome sequence of Escherichia coli DH10B: insights into the biology of a laboratory workhorse.</title>
        <authorList>
            <person name="Durfee T."/>
            <person name="Nelson R."/>
            <person name="Baldwin S."/>
            <person name="Plunkett G. III"/>
            <person name="Burland V."/>
            <person name="Mau B."/>
            <person name="Petrosino J.F."/>
            <person name="Qin X."/>
            <person name="Muzny D.M."/>
            <person name="Ayele M."/>
            <person name="Gibbs R.A."/>
            <person name="Csorgo B."/>
            <person name="Posfai G."/>
            <person name="Weinstock G.M."/>
            <person name="Blattner F.R."/>
        </authorList>
    </citation>
    <scope>NUCLEOTIDE SEQUENCE [LARGE SCALE GENOMIC DNA]</scope>
    <source>
        <strain>K12 / DH10B</strain>
    </source>
</reference>